<reference key="1">
    <citation type="journal article" date="2003" name="Nature">
        <title>The genome of a motile marine Synechococcus.</title>
        <authorList>
            <person name="Palenik B."/>
            <person name="Brahamsha B."/>
            <person name="Larimer F.W."/>
            <person name="Land M.L."/>
            <person name="Hauser L."/>
            <person name="Chain P."/>
            <person name="Lamerdin J.E."/>
            <person name="Regala W."/>
            <person name="Allen E.E."/>
            <person name="McCarren J."/>
            <person name="Paulsen I.T."/>
            <person name="Dufresne A."/>
            <person name="Partensky F."/>
            <person name="Webb E.A."/>
            <person name="Waterbury J."/>
        </authorList>
    </citation>
    <scope>NUCLEOTIDE SEQUENCE [LARGE SCALE GENOMIC DNA]</scope>
    <source>
        <strain>WH8102</strain>
    </source>
</reference>
<proteinExistence type="inferred from homology"/>
<gene>
    <name evidence="1" type="primary">rpmF</name>
    <name evidence="1" type="synonym">rpl32</name>
    <name type="ordered locus">SYNW1210</name>
</gene>
<accession>Q7U6X6</accession>
<organism>
    <name type="scientific">Parasynechococcus marenigrum (strain WH8102)</name>
    <dbReference type="NCBI Taxonomy" id="84588"/>
    <lineage>
        <taxon>Bacteria</taxon>
        <taxon>Bacillati</taxon>
        <taxon>Cyanobacteriota</taxon>
        <taxon>Cyanophyceae</taxon>
        <taxon>Synechococcales</taxon>
        <taxon>Prochlorococcaceae</taxon>
        <taxon>Parasynechococcus</taxon>
        <taxon>Parasynechococcus marenigrum</taxon>
    </lineage>
</organism>
<feature type="chain" id="PRO_0000172423" description="Large ribosomal subunit protein bL32">
    <location>
        <begin position="1"/>
        <end position="58"/>
    </location>
</feature>
<feature type="region of interest" description="Disordered" evidence="2">
    <location>
        <begin position="1"/>
        <end position="23"/>
    </location>
</feature>
<feature type="compositionally biased region" description="Basic residues" evidence="2">
    <location>
        <begin position="1"/>
        <end position="15"/>
    </location>
</feature>
<name>RL32_PARMW</name>
<dbReference type="EMBL" id="BX569692">
    <property type="protein sequence ID" value="CAE07725.1"/>
    <property type="molecule type" value="Genomic_DNA"/>
</dbReference>
<dbReference type="RefSeq" id="WP_011128075.1">
    <property type="nucleotide sequence ID" value="NC_005070.1"/>
</dbReference>
<dbReference type="SMR" id="Q7U6X6"/>
<dbReference type="STRING" id="84588.SYNW1210"/>
<dbReference type="KEGG" id="syw:SYNW1210"/>
<dbReference type="eggNOG" id="COG0333">
    <property type="taxonomic scope" value="Bacteria"/>
</dbReference>
<dbReference type="HOGENOM" id="CLU_199882_0_0_3"/>
<dbReference type="Proteomes" id="UP000001422">
    <property type="component" value="Chromosome"/>
</dbReference>
<dbReference type="GO" id="GO:0015934">
    <property type="term" value="C:large ribosomal subunit"/>
    <property type="evidence" value="ECO:0007669"/>
    <property type="project" value="InterPro"/>
</dbReference>
<dbReference type="GO" id="GO:0003735">
    <property type="term" value="F:structural constituent of ribosome"/>
    <property type="evidence" value="ECO:0007669"/>
    <property type="project" value="InterPro"/>
</dbReference>
<dbReference type="GO" id="GO:0006412">
    <property type="term" value="P:translation"/>
    <property type="evidence" value="ECO:0007669"/>
    <property type="project" value="UniProtKB-UniRule"/>
</dbReference>
<dbReference type="Gene3D" id="1.20.5.640">
    <property type="entry name" value="Single helix bin"/>
    <property type="match status" value="1"/>
</dbReference>
<dbReference type="HAMAP" id="MF_00340">
    <property type="entry name" value="Ribosomal_bL32"/>
    <property type="match status" value="1"/>
</dbReference>
<dbReference type="InterPro" id="IPR002677">
    <property type="entry name" value="Ribosomal_bL32"/>
</dbReference>
<dbReference type="InterPro" id="IPR044958">
    <property type="entry name" value="Ribosomal_bL32_plant/cyanobact"/>
</dbReference>
<dbReference type="InterPro" id="IPR011332">
    <property type="entry name" value="Ribosomal_zn-bd"/>
</dbReference>
<dbReference type="NCBIfam" id="TIGR01031">
    <property type="entry name" value="rpmF_bact"/>
    <property type="match status" value="1"/>
</dbReference>
<dbReference type="PANTHER" id="PTHR36083">
    <property type="entry name" value="50S RIBOSOMAL PROTEIN L32, CHLOROPLASTIC"/>
    <property type="match status" value="1"/>
</dbReference>
<dbReference type="PANTHER" id="PTHR36083:SF1">
    <property type="entry name" value="LARGE RIBOSOMAL SUBUNIT PROTEIN BL32C"/>
    <property type="match status" value="1"/>
</dbReference>
<dbReference type="Pfam" id="PF01783">
    <property type="entry name" value="Ribosomal_L32p"/>
    <property type="match status" value="1"/>
</dbReference>
<dbReference type="SUPFAM" id="SSF57829">
    <property type="entry name" value="Zn-binding ribosomal proteins"/>
    <property type="match status" value="1"/>
</dbReference>
<comment type="similarity">
    <text evidence="1">Belongs to the bacterial ribosomal protein bL32 family.</text>
</comment>
<evidence type="ECO:0000255" key="1">
    <source>
        <dbReference type="HAMAP-Rule" id="MF_00340"/>
    </source>
</evidence>
<evidence type="ECO:0000256" key="2">
    <source>
        <dbReference type="SAM" id="MobiDB-lite"/>
    </source>
</evidence>
<evidence type="ECO:0000305" key="3"/>
<protein>
    <recommendedName>
        <fullName evidence="1">Large ribosomal subunit protein bL32</fullName>
    </recommendedName>
    <alternativeName>
        <fullName evidence="3">50S ribosomal protein L32</fullName>
    </alternativeName>
</protein>
<keyword id="KW-0687">Ribonucleoprotein</keyword>
<keyword id="KW-0689">Ribosomal protein</keyword>
<sequence length="58" mass="6279">MAVPKKKTSKAKRNQRSATWKGKAAVAAQRAMSIGKSVLSGRAQGFVYPVREADDEES</sequence>